<accession>D2Y2P2</accession>
<feature type="signal peptide" evidence="2">
    <location>
        <begin position="1"/>
        <end position="18"/>
    </location>
</feature>
<feature type="propeptide" id="PRO_0000401037" evidence="3">
    <location>
        <begin position="19"/>
        <end position="46"/>
    </location>
</feature>
<feature type="peptide" id="PRO_0000401038" description="Hainantoxin-XVIII.2">
    <location>
        <begin position="47"/>
        <end position="109"/>
    </location>
</feature>
<feature type="disulfide bond" evidence="1">
    <location>
        <begin position="47"/>
        <end position="62"/>
    </location>
</feature>
<feature type="disulfide bond" evidence="1">
    <location>
        <begin position="55"/>
        <end position="68"/>
    </location>
</feature>
<feature type="disulfide bond" evidence="1">
    <location>
        <begin position="59"/>
        <end position="108"/>
    </location>
</feature>
<feature type="disulfide bond" evidence="1">
    <location>
        <begin position="61"/>
        <end position="81"/>
    </location>
</feature>
<sequence length="109" mass="11874">MKLSIIIIVTSLVIAVVAFPSKDSKAIENDKTEQRMEIVVQETARACSKQIGDKCKRNCECCGKTVVCGTIYVGGKEVNQCMDKTSDNAILNGLGKGMNFIENTFSFCV</sequence>
<evidence type="ECO:0000250" key="1"/>
<evidence type="ECO:0000255" key="2"/>
<evidence type="ECO:0000269" key="3">
    <source>
    </source>
</evidence>
<comment type="function">
    <text>Putative ion channel inhibitor.</text>
</comment>
<comment type="subcellular location">
    <subcellularLocation>
        <location>Secreted</location>
    </subcellularLocation>
</comment>
<comment type="tissue specificity">
    <text>Expressed by the venom gland.</text>
</comment>
<comment type="domain">
    <text evidence="1">The presence of a 'disulfide through disulfide knot' structurally defines this protein as a knottin.</text>
</comment>
<comment type="similarity">
    <text>Belongs to the neurotoxin 25 family. F7 subfamily.</text>
</comment>
<name>H18A2_CYRHA</name>
<proteinExistence type="evidence at protein level"/>
<keyword id="KW-0903">Direct protein sequencing</keyword>
<keyword id="KW-1015">Disulfide bond</keyword>
<keyword id="KW-0872">Ion channel impairing toxin</keyword>
<keyword id="KW-0960">Knottin</keyword>
<keyword id="KW-0964">Secreted</keyword>
<keyword id="KW-0732">Signal</keyword>
<keyword id="KW-0800">Toxin</keyword>
<dbReference type="EMBL" id="GU293119">
    <property type="protein sequence ID" value="ADB56935.1"/>
    <property type="molecule type" value="Genomic_DNA"/>
</dbReference>
<dbReference type="ArachnoServer" id="AS001560">
    <property type="toxin name" value="U14-theraphotoxin-Hhn1a"/>
</dbReference>
<dbReference type="GO" id="GO:0005576">
    <property type="term" value="C:extracellular region"/>
    <property type="evidence" value="ECO:0007669"/>
    <property type="project" value="UniProtKB-SubCell"/>
</dbReference>
<dbReference type="GO" id="GO:0099106">
    <property type="term" value="F:ion channel regulator activity"/>
    <property type="evidence" value="ECO:0007669"/>
    <property type="project" value="UniProtKB-KW"/>
</dbReference>
<dbReference type="GO" id="GO:0090729">
    <property type="term" value="F:toxin activity"/>
    <property type="evidence" value="ECO:0007669"/>
    <property type="project" value="UniProtKB-KW"/>
</dbReference>
<protein>
    <recommendedName>
        <fullName>Hainantoxin-XVIII.2</fullName>
        <shortName>HNTX-XVIII.2</shortName>
    </recommendedName>
    <alternativeName>
        <fullName>Peptide F7-35.67</fullName>
    </alternativeName>
</protein>
<organism>
    <name type="scientific">Cyriopagopus hainanus</name>
    <name type="common">Chinese bird spider</name>
    <name type="synonym">Haplopelma hainanum</name>
    <dbReference type="NCBI Taxonomy" id="209901"/>
    <lineage>
        <taxon>Eukaryota</taxon>
        <taxon>Metazoa</taxon>
        <taxon>Ecdysozoa</taxon>
        <taxon>Arthropoda</taxon>
        <taxon>Chelicerata</taxon>
        <taxon>Arachnida</taxon>
        <taxon>Araneae</taxon>
        <taxon>Mygalomorphae</taxon>
        <taxon>Theraphosidae</taxon>
        <taxon>Haplopelma</taxon>
    </lineage>
</organism>
<reference key="1">
    <citation type="journal article" date="2010" name="J. Proteome Res.">
        <title>Molecular diversification of peptide toxins from the tarantula Haplopelma hainanum (Ornithoctonus hainana) venom based on transcriptomic, peptidomic, and genomic analyses.</title>
        <authorList>
            <person name="Tang X."/>
            <person name="Zhang Y."/>
            <person name="Hu W."/>
            <person name="Xu D."/>
            <person name="Tao H."/>
            <person name="Yang X."/>
            <person name="Li Y."/>
            <person name="Jiang L."/>
            <person name="Liang S."/>
        </authorList>
    </citation>
    <scope>NUCLEOTIDE SEQUENCE [LARGE SCALE GENOMIC DNA / MRNA]</scope>
    <scope>PROTEIN SEQUENCE OF 47-95 AND 99-107</scope>
    <scope>IDENTIFICATION BY MASS SPECTROMETRY</scope>
    <source>
        <tissue>Venom</tissue>
        <tissue>Venom gland</tissue>
    </source>
</reference>